<dbReference type="EMBL" id="L22858">
    <property type="protein sequence ID" value="AAA66704.1"/>
    <property type="molecule type" value="Genomic_DNA"/>
</dbReference>
<dbReference type="PIR" id="C72859">
    <property type="entry name" value="C72859"/>
</dbReference>
<dbReference type="RefSeq" id="NP_054104.1">
    <property type="nucleotide sequence ID" value="NC_001623.1"/>
</dbReference>
<dbReference type="GeneID" id="1403907"/>
<dbReference type="KEGG" id="vg:1403907"/>
<dbReference type="OrthoDB" id="8724at10239"/>
<dbReference type="Proteomes" id="UP000008292">
    <property type="component" value="Segment"/>
</dbReference>
<dbReference type="InterPro" id="IPR022594">
    <property type="entry name" value="AcMNPV_30.6kDa"/>
</dbReference>
<dbReference type="Pfam" id="PF10866">
    <property type="entry name" value="DUF2704"/>
    <property type="match status" value="1"/>
</dbReference>
<accession>P41473</accession>
<sequence length="265" mass="30567">MKINLCNIQFQSLINLLNLQATTMSLLNSNKIKADLIPDEDDPKKITLRLNSVPEEHTDDNSSIDLPLTTPKQKDDFMNAIKSFETLNIEPDIVKTEQADAPATSGDNNRKVVDANVDEYTVDGLKLKSKYVAYYKCLKILVDFLVMYVSKEVSMKEYEQVYTLGRQLYEVLRSIFVDEPFKLWLERNTHEFDNNKDKILETLQSELKLALADKDKLKTCTFKDIITNLLNTKLDCKYDCADEYIKPNCIVDTYNCCNLVFKKET</sequence>
<proteinExistence type="predicted"/>
<organism>
    <name type="scientific">Autographa californica nuclear polyhedrosis virus</name>
    <name type="common">AcMNPV</name>
    <dbReference type="NCBI Taxonomy" id="46015"/>
    <lineage>
        <taxon>Viruses</taxon>
        <taxon>Viruses incertae sedis</taxon>
        <taxon>Naldaviricetes</taxon>
        <taxon>Lefavirales</taxon>
        <taxon>Baculoviridae</taxon>
        <taxon>Alphabaculovirus</taxon>
        <taxon>Alphabaculovirus aucalifornicae</taxon>
    </lineage>
</organism>
<organismHost>
    <name type="scientific">Lepidoptera</name>
    <name type="common">butterflies and moths</name>
    <dbReference type="NCBI Taxonomy" id="7088"/>
</organismHost>
<keyword id="KW-1185">Reference proteome</keyword>
<name>Y074_NPVAC</name>
<protein>
    <recommendedName>
        <fullName>Uncharacterized 30.6 kDa protein in IAP2-VLF1 intergenic region</fullName>
    </recommendedName>
</protein>
<feature type="chain" id="PRO_0000133014" description="Uncharacterized 30.6 kDa protein in IAP2-VLF1 intergenic region">
    <location>
        <begin position="1"/>
        <end position="265"/>
    </location>
</feature>
<reference key="1">
    <citation type="journal article" date="1994" name="Virology">
        <title>The complete DNA sequence of Autographa californica nuclear polyhedrosis virus.</title>
        <authorList>
            <person name="Ayres M.D."/>
            <person name="Howard S.C."/>
            <person name="Kuzio J."/>
            <person name="Lopez-Ferber M."/>
            <person name="Possee R.D."/>
        </authorList>
    </citation>
    <scope>NUCLEOTIDE SEQUENCE [LARGE SCALE GENOMIC DNA]</scope>
    <source>
        <strain>C6</strain>
    </source>
</reference>